<keyword id="KW-0687">Ribonucleoprotein</keyword>
<keyword id="KW-0689">Ribosomal protein</keyword>
<keyword id="KW-0694">RNA-binding</keyword>
<keyword id="KW-0699">rRNA-binding</keyword>
<reference key="1">
    <citation type="submission" date="2007-07" db="EMBL/GenBank/DDBJ databases">
        <title>Complete sequence of chromosome of Shewanella baltica OS185.</title>
        <authorList>
            <consortium name="US DOE Joint Genome Institute"/>
            <person name="Copeland A."/>
            <person name="Lucas S."/>
            <person name="Lapidus A."/>
            <person name="Barry K."/>
            <person name="Glavina del Rio T."/>
            <person name="Dalin E."/>
            <person name="Tice H."/>
            <person name="Pitluck S."/>
            <person name="Sims D."/>
            <person name="Brettin T."/>
            <person name="Bruce D."/>
            <person name="Detter J.C."/>
            <person name="Han C."/>
            <person name="Schmutz J."/>
            <person name="Larimer F."/>
            <person name="Land M."/>
            <person name="Hauser L."/>
            <person name="Kyrpides N."/>
            <person name="Mikhailova N."/>
            <person name="Brettar I."/>
            <person name="Rodrigues J."/>
            <person name="Konstantinidis K."/>
            <person name="Tiedje J."/>
            <person name="Richardson P."/>
        </authorList>
    </citation>
    <scope>NUCLEOTIDE SEQUENCE [LARGE SCALE GENOMIC DNA]</scope>
    <source>
        <strain>OS185</strain>
    </source>
</reference>
<gene>
    <name evidence="1" type="primary">rplV</name>
    <name type="ordered locus">Shew185_0201</name>
</gene>
<sequence length="110" mass="12071">MEVLAKHRFARTSAQKARLVADQIRGLPVAKALEILTFSPKKAAVLVKKVLDSAIANAEHNEGADIDELKVGAVFVDEGPTMKRIMPRAKGRADRIMKRTSHITVVVSDR</sequence>
<name>RL22_SHEB8</name>
<evidence type="ECO:0000255" key="1">
    <source>
        <dbReference type="HAMAP-Rule" id="MF_01331"/>
    </source>
</evidence>
<evidence type="ECO:0000305" key="2"/>
<comment type="function">
    <text evidence="1">This protein binds specifically to 23S rRNA; its binding is stimulated by other ribosomal proteins, e.g. L4, L17, and L20. It is important during the early stages of 50S assembly. It makes multiple contacts with different domains of the 23S rRNA in the assembled 50S subunit and ribosome (By similarity).</text>
</comment>
<comment type="function">
    <text evidence="1">The globular domain of the protein is located near the polypeptide exit tunnel on the outside of the subunit, while an extended beta-hairpin is found that lines the wall of the exit tunnel in the center of the 70S ribosome.</text>
</comment>
<comment type="subunit">
    <text evidence="1">Part of the 50S ribosomal subunit.</text>
</comment>
<comment type="similarity">
    <text evidence="1">Belongs to the universal ribosomal protein uL22 family.</text>
</comment>
<dbReference type="EMBL" id="CP000753">
    <property type="protein sequence ID" value="ABS06372.1"/>
    <property type="molecule type" value="Genomic_DNA"/>
</dbReference>
<dbReference type="RefSeq" id="WP_006083595.1">
    <property type="nucleotide sequence ID" value="NC_009665.1"/>
</dbReference>
<dbReference type="SMR" id="A6WHT3"/>
<dbReference type="GeneID" id="94726191"/>
<dbReference type="KEGG" id="sbm:Shew185_0201"/>
<dbReference type="HOGENOM" id="CLU_083987_3_3_6"/>
<dbReference type="GO" id="GO:0022625">
    <property type="term" value="C:cytosolic large ribosomal subunit"/>
    <property type="evidence" value="ECO:0007669"/>
    <property type="project" value="TreeGrafter"/>
</dbReference>
<dbReference type="GO" id="GO:0019843">
    <property type="term" value="F:rRNA binding"/>
    <property type="evidence" value="ECO:0007669"/>
    <property type="project" value="UniProtKB-UniRule"/>
</dbReference>
<dbReference type="GO" id="GO:0003735">
    <property type="term" value="F:structural constituent of ribosome"/>
    <property type="evidence" value="ECO:0007669"/>
    <property type="project" value="InterPro"/>
</dbReference>
<dbReference type="GO" id="GO:0006412">
    <property type="term" value="P:translation"/>
    <property type="evidence" value="ECO:0007669"/>
    <property type="project" value="UniProtKB-UniRule"/>
</dbReference>
<dbReference type="CDD" id="cd00336">
    <property type="entry name" value="Ribosomal_L22"/>
    <property type="match status" value="1"/>
</dbReference>
<dbReference type="FunFam" id="3.90.470.10:FF:000001">
    <property type="entry name" value="50S ribosomal protein L22"/>
    <property type="match status" value="1"/>
</dbReference>
<dbReference type="Gene3D" id="3.90.470.10">
    <property type="entry name" value="Ribosomal protein L22/L17"/>
    <property type="match status" value="1"/>
</dbReference>
<dbReference type="HAMAP" id="MF_01331_B">
    <property type="entry name" value="Ribosomal_uL22_B"/>
    <property type="match status" value="1"/>
</dbReference>
<dbReference type="InterPro" id="IPR001063">
    <property type="entry name" value="Ribosomal_uL22"/>
</dbReference>
<dbReference type="InterPro" id="IPR005727">
    <property type="entry name" value="Ribosomal_uL22_bac/chlpt-type"/>
</dbReference>
<dbReference type="InterPro" id="IPR047867">
    <property type="entry name" value="Ribosomal_uL22_bac/org-type"/>
</dbReference>
<dbReference type="InterPro" id="IPR018260">
    <property type="entry name" value="Ribosomal_uL22_CS"/>
</dbReference>
<dbReference type="InterPro" id="IPR036394">
    <property type="entry name" value="Ribosomal_uL22_sf"/>
</dbReference>
<dbReference type="NCBIfam" id="TIGR01044">
    <property type="entry name" value="rplV_bact"/>
    <property type="match status" value="1"/>
</dbReference>
<dbReference type="PANTHER" id="PTHR13501">
    <property type="entry name" value="CHLOROPLAST 50S RIBOSOMAL PROTEIN L22-RELATED"/>
    <property type="match status" value="1"/>
</dbReference>
<dbReference type="PANTHER" id="PTHR13501:SF8">
    <property type="entry name" value="LARGE RIBOSOMAL SUBUNIT PROTEIN UL22M"/>
    <property type="match status" value="1"/>
</dbReference>
<dbReference type="Pfam" id="PF00237">
    <property type="entry name" value="Ribosomal_L22"/>
    <property type="match status" value="1"/>
</dbReference>
<dbReference type="SUPFAM" id="SSF54843">
    <property type="entry name" value="Ribosomal protein L22"/>
    <property type="match status" value="1"/>
</dbReference>
<dbReference type="PROSITE" id="PS00464">
    <property type="entry name" value="RIBOSOMAL_L22"/>
    <property type="match status" value="1"/>
</dbReference>
<feature type="chain" id="PRO_1000052644" description="Large ribosomal subunit protein uL22">
    <location>
        <begin position="1"/>
        <end position="110"/>
    </location>
</feature>
<proteinExistence type="inferred from homology"/>
<organism>
    <name type="scientific">Shewanella baltica (strain OS185)</name>
    <dbReference type="NCBI Taxonomy" id="402882"/>
    <lineage>
        <taxon>Bacteria</taxon>
        <taxon>Pseudomonadati</taxon>
        <taxon>Pseudomonadota</taxon>
        <taxon>Gammaproteobacteria</taxon>
        <taxon>Alteromonadales</taxon>
        <taxon>Shewanellaceae</taxon>
        <taxon>Shewanella</taxon>
    </lineage>
</organism>
<protein>
    <recommendedName>
        <fullName evidence="1">Large ribosomal subunit protein uL22</fullName>
    </recommendedName>
    <alternativeName>
        <fullName evidence="2">50S ribosomal protein L22</fullName>
    </alternativeName>
</protein>
<accession>A6WHT3</accession>